<dbReference type="EC" id="4.2.3.6"/>
<dbReference type="EMBL" id="AJ784992">
    <property type="protein sequence ID" value="CAH05021.1"/>
    <property type="molecule type" value="Genomic_DNA"/>
</dbReference>
<dbReference type="SMR" id="Q6A1B7"/>
<dbReference type="BRENDA" id="4.2.3.6">
    <property type="organism ID" value="6445"/>
</dbReference>
<dbReference type="UniPathway" id="UPA00267"/>
<dbReference type="GO" id="GO:0045482">
    <property type="term" value="F:trichodiene synthase activity"/>
    <property type="evidence" value="ECO:0007669"/>
    <property type="project" value="UniProtKB-EC"/>
</dbReference>
<dbReference type="GO" id="GO:0016106">
    <property type="term" value="P:sesquiterpenoid biosynthetic process"/>
    <property type="evidence" value="ECO:0007669"/>
    <property type="project" value="InterPro"/>
</dbReference>
<dbReference type="Gene3D" id="1.10.600.10">
    <property type="entry name" value="Farnesyl Diphosphate Synthase"/>
    <property type="match status" value="1"/>
</dbReference>
<dbReference type="InterPro" id="IPR008949">
    <property type="entry name" value="Isoprenoid_synthase_dom_sf"/>
</dbReference>
<dbReference type="InterPro" id="IPR010458">
    <property type="entry name" value="TRI5_ascomyc"/>
</dbReference>
<dbReference type="InterPro" id="IPR024652">
    <property type="entry name" value="Trichodiene_synth"/>
</dbReference>
<dbReference type="Pfam" id="PF06330">
    <property type="entry name" value="TRI5"/>
    <property type="match status" value="1"/>
</dbReference>
<dbReference type="PIRSF" id="PIRSF001388">
    <property type="entry name" value="TRI5"/>
    <property type="match status" value="1"/>
</dbReference>
<dbReference type="SFLD" id="SFLDS00005">
    <property type="entry name" value="Isoprenoid_Synthase_Type_I"/>
    <property type="match status" value="1"/>
</dbReference>
<dbReference type="SFLD" id="SFLDG01021">
    <property type="entry name" value="Trichodiene_Synthase_Like"/>
    <property type="match status" value="1"/>
</dbReference>
<dbReference type="SUPFAM" id="SSF48576">
    <property type="entry name" value="Terpenoid synthases"/>
    <property type="match status" value="1"/>
</dbReference>
<gene>
    <name type="primary">TRI5</name>
</gene>
<accession>Q6A1B7</accession>
<name>TRI5_TRIHA</name>
<comment type="function">
    <text>TS is a member of the terpene cyclase group of enzymes. It catalyzes the isomerization and cyclization of farnesyl pyro-phosphate to form trichodiene, the first cyclic intermediate in the biosynthetic pathway for trichothecenes. It serves to branch trichothecene biosynthesis from the isoprenoid pathway.</text>
</comment>
<comment type="catalytic activity">
    <reaction>
        <text>(2E,6E)-farnesyl diphosphate = trichodiene + diphosphate</text>
        <dbReference type="Rhea" id="RHEA:12052"/>
        <dbReference type="ChEBI" id="CHEBI:15861"/>
        <dbReference type="ChEBI" id="CHEBI:33019"/>
        <dbReference type="ChEBI" id="CHEBI:175763"/>
        <dbReference type="EC" id="4.2.3.6"/>
    </reaction>
</comment>
<comment type="pathway">
    <text>Sesquiterpene biosynthesis; trichothecene biosynthesis.</text>
</comment>
<comment type="miscellaneous">
    <text>Trichothecenes are sesquiterpenoid toxins that act by inhibiting protein biosynthesis.</text>
</comment>
<comment type="similarity">
    <text evidence="1">Belongs to the trichodiene synthase family.</text>
</comment>
<reference key="1">
    <citation type="journal article" date="2004" name="Physiol. Mol. Plant Pathol.">
        <title>Isolation and characterisation of a trichodiene synthase homologous gene in Trichoderma harzianum.</title>
        <authorList>
            <person name="Gallo A."/>
            <person name="Mulle G."/>
            <person name="Favilla M."/>
            <person name="Altomare C."/>
        </authorList>
        <dbReference type="AGRICOLA" id="IND43692444"/>
    </citation>
    <scope>NUCLEOTIDE SEQUENCE [GENOMIC DNA]</scope>
    <source>
        <strain>ATCC 90237 / F17927</strain>
    </source>
</reference>
<feature type="chain" id="PRO_0000221589" description="Trichodiene synthase">
    <location>
        <begin position="1"/>
        <end position="388"/>
    </location>
</feature>
<evidence type="ECO:0000305" key="1"/>
<keyword id="KW-0456">Lyase</keyword>
<proteinExistence type="inferred from homology"/>
<sequence>MVELNDVPGEEEFPRATYLETMVRLLDTVSYNDENFTDEERVECLKYAYGKAAEHFAQPHVQETLKVPPKRMAAALKTIVGMCVYSWCRVSKEVMADLSIHYTYTLLLDDSREEPAGTMATWYEDLLNARPQAHGWWRLVNDFIPNVLRHYGGYCQMNMVRSTIDFFQGCWIEQHNFKGFRGSSDYPGFLRRINGLGHCVGSSIWPIELVDEEEHFLEITTAIAQMENWMVWTNDLFSFYKEYFAERDQTSLVNNYVECEGITLDQALDKLCKDTIRSSEEIIQVFHDKDPKMYEILTRFIQGYITWHLCDDRYRLVEVYEAAGDDPVAQKFKKYAESARRVGAIDPARYCVPSVTELCEREMAKQSAGRSWDFGLGKIANKISSVAQ</sequence>
<organism>
    <name type="scientific">Trichoderma harzianum</name>
    <name type="common">Hypocrea lixii</name>
    <dbReference type="NCBI Taxonomy" id="5544"/>
    <lineage>
        <taxon>Eukaryota</taxon>
        <taxon>Fungi</taxon>
        <taxon>Dikarya</taxon>
        <taxon>Ascomycota</taxon>
        <taxon>Pezizomycotina</taxon>
        <taxon>Sordariomycetes</taxon>
        <taxon>Hypocreomycetidae</taxon>
        <taxon>Hypocreales</taxon>
        <taxon>Hypocreaceae</taxon>
        <taxon>Trichoderma</taxon>
    </lineage>
</organism>
<protein>
    <recommendedName>
        <fullName>Trichodiene synthase</fullName>
        <ecNumber>4.2.3.6</ecNumber>
    </recommendedName>
    <alternativeName>
        <fullName>Sesquiterpene cyclase</fullName>
        <shortName>TS</shortName>
    </alternativeName>
</protein>